<name>AROK_SHIFL</name>
<comment type="function">
    <text evidence="2">Catalyzes the specific phosphorylation of the 3-hydroxyl group of shikimic acid using ATP as a cosubstrate.</text>
</comment>
<comment type="catalytic activity">
    <reaction evidence="2">
        <text>shikimate + ATP = 3-phosphoshikimate + ADP + H(+)</text>
        <dbReference type="Rhea" id="RHEA:13121"/>
        <dbReference type="ChEBI" id="CHEBI:15378"/>
        <dbReference type="ChEBI" id="CHEBI:30616"/>
        <dbReference type="ChEBI" id="CHEBI:36208"/>
        <dbReference type="ChEBI" id="CHEBI:145989"/>
        <dbReference type="ChEBI" id="CHEBI:456216"/>
        <dbReference type="EC" id="2.7.1.71"/>
    </reaction>
</comment>
<comment type="cofactor">
    <cofactor evidence="2">
        <name>Mg(2+)</name>
        <dbReference type="ChEBI" id="CHEBI:18420"/>
    </cofactor>
    <text evidence="2">Binds 1 Mg(2+) ion per subunit.</text>
</comment>
<comment type="pathway">
    <text evidence="2">Metabolic intermediate biosynthesis; chorismate biosynthesis; chorismate from D-erythrose 4-phosphate and phosphoenolpyruvate: step 5/7.</text>
</comment>
<comment type="subunit">
    <text evidence="2">Monomer.</text>
</comment>
<comment type="subcellular location">
    <subcellularLocation>
        <location evidence="2">Cytoplasm</location>
    </subcellularLocation>
</comment>
<comment type="similarity">
    <text evidence="2">Belongs to the shikimate kinase family.</text>
</comment>
<comment type="sequence caution" evidence="3">
    <conflict type="erroneous initiation">
        <sequence resource="EMBL-CDS" id="AAN44870"/>
    </conflict>
    <text>Extended N-terminus.</text>
</comment>
<comment type="sequence caution" evidence="3">
    <conflict type="erroneous initiation">
        <sequence resource="EMBL-CDS" id="AAP19308"/>
    </conflict>
    <text>Extended N-terminus.</text>
</comment>
<sequence length="173" mass="19538">MAEKRNIFLVGPMGAGKSTIGRQLAQQLNMEFYDSDQEIEKRTGADVGWVFDLEGEEGFRDREEKVINELTEKQGIVLATGGGSVKSRETRNRLSARGVVVYLETTIEKQLARTQRDKKRPLLHVETPPREVLEALANERNPLYEEIADVTIRTDDQSAKVVANQIIHMLESN</sequence>
<dbReference type="EC" id="2.7.1.71" evidence="2"/>
<dbReference type="EMBL" id="AE005674">
    <property type="protein sequence ID" value="AAN44870.2"/>
    <property type="status" value="ALT_INIT"/>
    <property type="molecule type" value="Genomic_DNA"/>
</dbReference>
<dbReference type="EMBL" id="AE014073">
    <property type="protein sequence ID" value="AAP19308.1"/>
    <property type="status" value="ALT_INIT"/>
    <property type="molecule type" value="Genomic_DNA"/>
</dbReference>
<dbReference type="RefSeq" id="NP_709163.4">
    <property type="nucleotide sequence ID" value="NC_004337.2"/>
</dbReference>
<dbReference type="RefSeq" id="WP_000818618.1">
    <property type="nucleotide sequence ID" value="NZ_WPGW01000003.1"/>
</dbReference>
<dbReference type="SMR" id="P0A6E0"/>
<dbReference type="STRING" id="198214.SF3408"/>
<dbReference type="PaxDb" id="198214-SF3408"/>
<dbReference type="GeneID" id="1023789"/>
<dbReference type="GeneID" id="93778608"/>
<dbReference type="KEGG" id="sfl:SF3408"/>
<dbReference type="KEGG" id="sfx:S4354"/>
<dbReference type="PATRIC" id="fig|198214.7.peg.4022"/>
<dbReference type="HOGENOM" id="CLU_057607_2_2_6"/>
<dbReference type="UniPathway" id="UPA00053">
    <property type="reaction ID" value="UER00088"/>
</dbReference>
<dbReference type="Proteomes" id="UP000001006">
    <property type="component" value="Chromosome"/>
</dbReference>
<dbReference type="Proteomes" id="UP000002673">
    <property type="component" value="Chromosome"/>
</dbReference>
<dbReference type="GO" id="GO:0005829">
    <property type="term" value="C:cytosol"/>
    <property type="evidence" value="ECO:0007669"/>
    <property type="project" value="TreeGrafter"/>
</dbReference>
<dbReference type="GO" id="GO:0005524">
    <property type="term" value="F:ATP binding"/>
    <property type="evidence" value="ECO:0007669"/>
    <property type="project" value="UniProtKB-UniRule"/>
</dbReference>
<dbReference type="GO" id="GO:0000287">
    <property type="term" value="F:magnesium ion binding"/>
    <property type="evidence" value="ECO:0007669"/>
    <property type="project" value="UniProtKB-UniRule"/>
</dbReference>
<dbReference type="GO" id="GO:0004765">
    <property type="term" value="F:shikimate kinase activity"/>
    <property type="evidence" value="ECO:0007669"/>
    <property type="project" value="UniProtKB-UniRule"/>
</dbReference>
<dbReference type="GO" id="GO:0008652">
    <property type="term" value="P:amino acid biosynthetic process"/>
    <property type="evidence" value="ECO:0007669"/>
    <property type="project" value="UniProtKB-KW"/>
</dbReference>
<dbReference type="GO" id="GO:0009073">
    <property type="term" value="P:aromatic amino acid family biosynthetic process"/>
    <property type="evidence" value="ECO:0007669"/>
    <property type="project" value="UniProtKB-KW"/>
</dbReference>
<dbReference type="GO" id="GO:0009423">
    <property type="term" value="P:chorismate biosynthetic process"/>
    <property type="evidence" value="ECO:0007669"/>
    <property type="project" value="UniProtKB-UniRule"/>
</dbReference>
<dbReference type="CDD" id="cd00464">
    <property type="entry name" value="SK"/>
    <property type="match status" value="1"/>
</dbReference>
<dbReference type="FunFam" id="3.40.50.300:FF:000099">
    <property type="entry name" value="Shikimate kinase 1"/>
    <property type="match status" value="1"/>
</dbReference>
<dbReference type="Gene3D" id="3.40.50.300">
    <property type="entry name" value="P-loop containing nucleotide triphosphate hydrolases"/>
    <property type="match status" value="1"/>
</dbReference>
<dbReference type="HAMAP" id="MF_00109">
    <property type="entry name" value="Shikimate_kinase"/>
    <property type="match status" value="1"/>
</dbReference>
<dbReference type="InterPro" id="IPR027417">
    <property type="entry name" value="P-loop_NTPase"/>
</dbReference>
<dbReference type="InterPro" id="IPR031322">
    <property type="entry name" value="Shikimate/glucono_kinase"/>
</dbReference>
<dbReference type="InterPro" id="IPR000623">
    <property type="entry name" value="Shikimate_kinase/TSH1"/>
</dbReference>
<dbReference type="InterPro" id="IPR023000">
    <property type="entry name" value="Shikimate_kinase_CS"/>
</dbReference>
<dbReference type="NCBIfam" id="NF003456">
    <property type="entry name" value="PRK05057.1"/>
    <property type="match status" value="1"/>
</dbReference>
<dbReference type="PANTHER" id="PTHR21087">
    <property type="entry name" value="SHIKIMATE KINASE"/>
    <property type="match status" value="1"/>
</dbReference>
<dbReference type="PANTHER" id="PTHR21087:SF16">
    <property type="entry name" value="SHIKIMATE KINASE 1, CHLOROPLASTIC"/>
    <property type="match status" value="1"/>
</dbReference>
<dbReference type="Pfam" id="PF01202">
    <property type="entry name" value="SKI"/>
    <property type="match status" value="1"/>
</dbReference>
<dbReference type="PRINTS" id="PR01100">
    <property type="entry name" value="SHIKIMTKNASE"/>
</dbReference>
<dbReference type="SUPFAM" id="SSF52540">
    <property type="entry name" value="P-loop containing nucleoside triphosphate hydrolases"/>
    <property type="match status" value="1"/>
</dbReference>
<dbReference type="PROSITE" id="PS01128">
    <property type="entry name" value="SHIKIMATE_KINASE"/>
    <property type="match status" value="1"/>
</dbReference>
<protein>
    <recommendedName>
        <fullName evidence="2">Shikimate kinase 1</fullName>
        <shortName evidence="2">SK 1</shortName>
        <ecNumber evidence="2">2.7.1.71</ecNumber>
    </recommendedName>
</protein>
<keyword id="KW-0028">Amino-acid biosynthesis</keyword>
<keyword id="KW-0057">Aromatic amino acid biosynthesis</keyword>
<keyword id="KW-0067">ATP-binding</keyword>
<keyword id="KW-0963">Cytoplasm</keyword>
<keyword id="KW-0418">Kinase</keyword>
<keyword id="KW-0460">Magnesium</keyword>
<keyword id="KW-0479">Metal-binding</keyword>
<keyword id="KW-0547">Nucleotide-binding</keyword>
<keyword id="KW-1185">Reference proteome</keyword>
<keyword id="KW-0808">Transferase</keyword>
<feature type="initiator methionine" description="Removed" evidence="1">
    <location>
        <position position="1"/>
    </location>
</feature>
<feature type="chain" id="PRO_0000192409" description="Shikimate kinase 1">
    <location>
        <begin position="2"/>
        <end position="173"/>
    </location>
</feature>
<feature type="binding site" evidence="2">
    <location>
        <begin position="14"/>
        <end position="19"/>
    </location>
    <ligand>
        <name>ATP</name>
        <dbReference type="ChEBI" id="CHEBI:30616"/>
    </ligand>
</feature>
<feature type="binding site" evidence="2">
    <location>
        <position position="18"/>
    </location>
    <ligand>
        <name>Mg(2+)</name>
        <dbReference type="ChEBI" id="CHEBI:18420"/>
    </ligand>
</feature>
<feature type="binding site" evidence="2">
    <location>
        <position position="36"/>
    </location>
    <ligand>
        <name>substrate</name>
    </ligand>
</feature>
<feature type="binding site" evidence="2">
    <location>
        <position position="60"/>
    </location>
    <ligand>
        <name>substrate</name>
    </ligand>
</feature>
<feature type="binding site" evidence="2">
    <location>
        <position position="82"/>
    </location>
    <ligand>
        <name>substrate</name>
    </ligand>
</feature>
<feature type="binding site" evidence="2">
    <location>
        <position position="120"/>
    </location>
    <ligand>
        <name>ATP</name>
        <dbReference type="ChEBI" id="CHEBI:30616"/>
    </ligand>
</feature>
<feature type="binding site" evidence="2">
    <location>
        <position position="140"/>
    </location>
    <ligand>
        <name>substrate</name>
    </ligand>
</feature>
<feature type="binding site" evidence="2">
    <location>
        <position position="157"/>
    </location>
    <ligand>
        <name>ATP</name>
        <dbReference type="ChEBI" id="CHEBI:30616"/>
    </ligand>
</feature>
<proteinExistence type="inferred from homology"/>
<evidence type="ECO:0000250" key="1"/>
<evidence type="ECO:0000255" key="2">
    <source>
        <dbReference type="HAMAP-Rule" id="MF_00109"/>
    </source>
</evidence>
<evidence type="ECO:0000305" key="3"/>
<reference key="1">
    <citation type="journal article" date="2002" name="Nucleic Acids Res.">
        <title>Genome sequence of Shigella flexneri 2a: insights into pathogenicity through comparison with genomes of Escherichia coli K12 and O157.</title>
        <authorList>
            <person name="Jin Q."/>
            <person name="Yuan Z."/>
            <person name="Xu J."/>
            <person name="Wang Y."/>
            <person name="Shen Y."/>
            <person name="Lu W."/>
            <person name="Wang J."/>
            <person name="Liu H."/>
            <person name="Yang J."/>
            <person name="Yang F."/>
            <person name="Zhang X."/>
            <person name="Zhang J."/>
            <person name="Yang G."/>
            <person name="Wu H."/>
            <person name="Qu D."/>
            <person name="Dong J."/>
            <person name="Sun L."/>
            <person name="Xue Y."/>
            <person name="Zhao A."/>
            <person name="Gao Y."/>
            <person name="Zhu J."/>
            <person name="Kan B."/>
            <person name="Ding K."/>
            <person name="Chen S."/>
            <person name="Cheng H."/>
            <person name="Yao Z."/>
            <person name="He B."/>
            <person name="Chen R."/>
            <person name="Ma D."/>
            <person name="Qiang B."/>
            <person name="Wen Y."/>
            <person name="Hou Y."/>
            <person name="Yu J."/>
        </authorList>
    </citation>
    <scope>NUCLEOTIDE SEQUENCE [LARGE SCALE GENOMIC DNA]</scope>
    <source>
        <strain>301 / Serotype 2a</strain>
    </source>
</reference>
<reference key="2">
    <citation type="journal article" date="2003" name="Infect. Immun.">
        <title>Complete genome sequence and comparative genomics of Shigella flexneri serotype 2a strain 2457T.</title>
        <authorList>
            <person name="Wei J."/>
            <person name="Goldberg M.B."/>
            <person name="Burland V."/>
            <person name="Venkatesan M.M."/>
            <person name="Deng W."/>
            <person name="Fournier G."/>
            <person name="Mayhew G.F."/>
            <person name="Plunkett G. III"/>
            <person name="Rose D.J."/>
            <person name="Darling A."/>
            <person name="Mau B."/>
            <person name="Perna N.T."/>
            <person name="Payne S.M."/>
            <person name="Runyen-Janecky L.J."/>
            <person name="Zhou S."/>
            <person name="Schwartz D.C."/>
            <person name="Blattner F.R."/>
        </authorList>
    </citation>
    <scope>NUCLEOTIDE SEQUENCE [LARGE SCALE GENOMIC DNA]</scope>
    <source>
        <strain>ATCC 700930 / 2457T / Serotype 2a</strain>
    </source>
</reference>
<organism>
    <name type="scientific">Shigella flexneri</name>
    <dbReference type="NCBI Taxonomy" id="623"/>
    <lineage>
        <taxon>Bacteria</taxon>
        <taxon>Pseudomonadati</taxon>
        <taxon>Pseudomonadota</taxon>
        <taxon>Gammaproteobacteria</taxon>
        <taxon>Enterobacterales</taxon>
        <taxon>Enterobacteriaceae</taxon>
        <taxon>Shigella</taxon>
    </lineage>
</organism>
<accession>P0A6E0</accession>
<accession>P24167</accession>
<accession>P78113</accession>
<accession>Q8X4S0</accession>
<gene>
    <name evidence="2" type="primary">aroK</name>
    <name type="ordered locus">SF3408</name>
    <name type="ordered locus">S4354</name>
</gene>